<gene>
    <name type="primary">bxlB</name>
    <name type="ORF">ACLA_062400</name>
</gene>
<proteinExistence type="inferred from homology"/>
<keyword id="KW-0119">Carbohydrate metabolism</keyword>
<keyword id="KW-0325">Glycoprotein</keyword>
<keyword id="KW-0326">Glycosidase</keyword>
<keyword id="KW-0378">Hydrolase</keyword>
<keyword id="KW-0624">Polysaccharide degradation</keyword>
<keyword id="KW-1185">Reference proteome</keyword>
<keyword id="KW-0964">Secreted</keyword>
<keyword id="KW-0732">Signal</keyword>
<keyword id="KW-0858">Xylan degradation</keyword>
<organism>
    <name type="scientific">Aspergillus clavatus (strain ATCC 1007 / CBS 513.65 / DSM 816 / NCTC 3887 / NRRL 1 / QM 1276 / 107)</name>
    <dbReference type="NCBI Taxonomy" id="344612"/>
    <lineage>
        <taxon>Eukaryota</taxon>
        <taxon>Fungi</taxon>
        <taxon>Dikarya</taxon>
        <taxon>Ascomycota</taxon>
        <taxon>Pezizomycotina</taxon>
        <taxon>Eurotiomycetes</taxon>
        <taxon>Eurotiomycetidae</taxon>
        <taxon>Eurotiales</taxon>
        <taxon>Aspergillaceae</taxon>
        <taxon>Aspergillus</taxon>
        <taxon>Aspergillus subgen. Fumigati</taxon>
    </lineage>
</organism>
<dbReference type="EC" id="3.2.1.37"/>
<dbReference type="EMBL" id="DS027050">
    <property type="protein sequence ID" value="EAW12276.1"/>
    <property type="status" value="ALT_INIT"/>
    <property type="molecule type" value="Genomic_DNA"/>
</dbReference>
<dbReference type="RefSeq" id="XP_001273702.1">
    <property type="nucleotide sequence ID" value="XM_001273701.1"/>
</dbReference>
<dbReference type="SMR" id="A1CCL9"/>
<dbReference type="STRING" id="344612.A1CCL9"/>
<dbReference type="GlyCosmos" id="A1CCL9">
    <property type="glycosylation" value="6 sites, No reported glycans"/>
</dbReference>
<dbReference type="EnsemblFungi" id="EAW12276">
    <property type="protein sequence ID" value="EAW12276"/>
    <property type="gene ID" value="ACLA_062400"/>
</dbReference>
<dbReference type="GeneID" id="4705939"/>
<dbReference type="KEGG" id="act:ACLA_062400"/>
<dbReference type="eggNOG" id="ENOG502QQ55">
    <property type="taxonomic scope" value="Eukaryota"/>
</dbReference>
<dbReference type="OrthoDB" id="47059at2759"/>
<dbReference type="UniPathway" id="UPA00114"/>
<dbReference type="Proteomes" id="UP000006701">
    <property type="component" value="Unassembled WGS sequence"/>
</dbReference>
<dbReference type="GO" id="GO:0005576">
    <property type="term" value="C:extracellular region"/>
    <property type="evidence" value="ECO:0007669"/>
    <property type="project" value="UniProtKB-SubCell"/>
</dbReference>
<dbReference type="GO" id="GO:0046556">
    <property type="term" value="F:alpha-L-arabinofuranosidase activity"/>
    <property type="evidence" value="ECO:0007669"/>
    <property type="project" value="TreeGrafter"/>
</dbReference>
<dbReference type="GO" id="GO:0009044">
    <property type="term" value="F:xylan 1,4-beta-xylosidase activity"/>
    <property type="evidence" value="ECO:0007669"/>
    <property type="project" value="UniProtKB-EC"/>
</dbReference>
<dbReference type="GO" id="GO:0031222">
    <property type="term" value="P:arabinan catabolic process"/>
    <property type="evidence" value="ECO:0007669"/>
    <property type="project" value="TreeGrafter"/>
</dbReference>
<dbReference type="GO" id="GO:0045493">
    <property type="term" value="P:xylan catabolic process"/>
    <property type="evidence" value="ECO:0007669"/>
    <property type="project" value="UniProtKB-UniPathway"/>
</dbReference>
<dbReference type="FunFam" id="2.60.40.10:FF:001420">
    <property type="entry name" value="Exo-1,4-beta-xylosidase xlnD"/>
    <property type="match status" value="1"/>
</dbReference>
<dbReference type="FunFam" id="3.40.50.1700:FF:000007">
    <property type="entry name" value="Exo-1,4-beta-xylosidase xlnD"/>
    <property type="match status" value="1"/>
</dbReference>
<dbReference type="FunFam" id="3.20.20.300:FF:000013">
    <property type="entry name" value="Probable exo-1,4-beta-xylosidase xlnD"/>
    <property type="match status" value="1"/>
</dbReference>
<dbReference type="Gene3D" id="3.40.50.1700">
    <property type="entry name" value="Glycoside hydrolase family 3 C-terminal domain"/>
    <property type="match status" value="1"/>
</dbReference>
<dbReference type="Gene3D" id="3.20.20.300">
    <property type="entry name" value="Glycoside hydrolase, family 3, N-terminal domain"/>
    <property type="match status" value="1"/>
</dbReference>
<dbReference type="Gene3D" id="2.60.40.10">
    <property type="entry name" value="Immunoglobulins"/>
    <property type="match status" value="1"/>
</dbReference>
<dbReference type="InterPro" id="IPR044993">
    <property type="entry name" value="BXL"/>
</dbReference>
<dbReference type="InterPro" id="IPR026891">
    <property type="entry name" value="Fn3-like"/>
</dbReference>
<dbReference type="InterPro" id="IPR002772">
    <property type="entry name" value="Glyco_hydro_3_C"/>
</dbReference>
<dbReference type="InterPro" id="IPR036881">
    <property type="entry name" value="Glyco_hydro_3_C_sf"/>
</dbReference>
<dbReference type="InterPro" id="IPR001764">
    <property type="entry name" value="Glyco_hydro_3_N"/>
</dbReference>
<dbReference type="InterPro" id="IPR036962">
    <property type="entry name" value="Glyco_hydro_3_N_sf"/>
</dbReference>
<dbReference type="InterPro" id="IPR017853">
    <property type="entry name" value="Glycoside_hydrolase_SF"/>
</dbReference>
<dbReference type="InterPro" id="IPR013783">
    <property type="entry name" value="Ig-like_fold"/>
</dbReference>
<dbReference type="PANTHER" id="PTHR42721:SF3">
    <property type="entry name" value="BETA-D-XYLOSIDASE 5-RELATED"/>
    <property type="match status" value="1"/>
</dbReference>
<dbReference type="PANTHER" id="PTHR42721">
    <property type="entry name" value="SUGAR HYDROLASE-RELATED"/>
    <property type="match status" value="1"/>
</dbReference>
<dbReference type="Pfam" id="PF14310">
    <property type="entry name" value="Fn3-like"/>
    <property type="match status" value="1"/>
</dbReference>
<dbReference type="Pfam" id="PF00933">
    <property type="entry name" value="Glyco_hydro_3"/>
    <property type="match status" value="1"/>
</dbReference>
<dbReference type="Pfam" id="PF01915">
    <property type="entry name" value="Glyco_hydro_3_C"/>
    <property type="match status" value="1"/>
</dbReference>
<dbReference type="SMART" id="SM01217">
    <property type="entry name" value="Fn3_like"/>
    <property type="match status" value="1"/>
</dbReference>
<dbReference type="SUPFAM" id="SSF51445">
    <property type="entry name" value="(Trans)glycosidases"/>
    <property type="match status" value="1"/>
</dbReference>
<dbReference type="SUPFAM" id="SSF52279">
    <property type="entry name" value="Beta-D-glucan exohydrolase, C-terminal domain"/>
    <property type="match status" value="1"/>
</dbReference>
<protein>
    <recommendedName>
        <fullName>Probable exo-1,4-beta-xylosidase bxlB</fullName>
        <ecNumber>3.2.1.37</ecNumber>
    </recommendedName>
    <alternativeName>
        <fullName>1,4-beta-D-xylan xylohydrolase bxlB</fullName>
    </alternativeName>
    <alternativeName>
        <fullName>Beta-xylosidase bxlB</fullName>
    </alternativeName>
    <alternativeName>
        <fullName>Xylobiase bxlB</fullName>
    </alternativeName>
</protein>
<name>BXLB_ASPCL</name>
<comment type="function">
    <text evidence="1">Xylan 1,4-beta-xylosidase involved in the hydrolysis of xylan, a major structural heterogeneous polysaccharide found in plant biomass representing the second most abundant polysaccharide in the biosphere, after cellulose.</text>
</comment>
<comment type="catalytic activity">
    <reaction>
        <text>Hydrolysis of (1-&gt;4)-beta-D-xylans, to remove successive D-xylose residues from the non-reducing termini.</text>
        <dbReference type="EC" id="3.2.1.37"/>
    </reaction>
</comment>
<comment type="pathway">
    <text>Glycan degradation; xylan degradation.</text>
</comment>
<comment type="subcellular location">
    <subcellularLocation>
        <location evidence="1">Secreted</location>
    </subcellularLocation>
</comment>
<comment type="similarity">
    <text evidence="3">Belongs to the glycosyl hydrolase 3 family.</text>
</comment>
<comment type="sequence caution" evidence="3">
    <conflict type="erroneous initiation">
        <sequence resource="EMBL-CDS" id="EAW12276"/>
    </conflict>
    <text>Extended N-terminus.</text>
</comment>
<accession>A1CCL9</accession>
<sequence length="771" mass="83355">MVGLTPQHYGNAIALMTYLASTALADNKFPDCTSGPLSKLAVCDTSRDVTTRAQSLVDAMSFAEKVNNTQYEAPGVPRLGLPAYNWWSEALHGVAGAPGVHFADSGPFSYATSFAQPILLGASFDDELVKQVATVVGTEGRAFGNAGRAGLDYWTPNINPFRDPRWGRGQETPGEDPLHVSRYVYHLVDGLQGGIGPARPQIAATCKHFAAYDMEDWNGVSRHEFDARVSTQDLAEFYLPSFKSCVRDAQVDAVMCSYNALNGVPTCADPYLLQTLLREHWDWDQPGHWVVSDCGAIDDIYIGHNYTKTGAEAAAVALNAGTDLDCGTVFPKHLGEAAEQGLYTNQTLDRALVRLYSSLVKLGYFDPAEKQPYGSIGWKDVDTPAAEQLAHKAAVEGIVLLKNDQTLPLKAKGTLALIGPYANATKQMQGNYQGPPKYIRTLEWAATQHGYQVQYSPGTAINNSSTAGFAAALAAAKDADVVLYAGGIDNTIESETLDRTTITWPGNQLSLISELSNLHKPLIVIQFGGGQVDDTPLLTNPHVNALLWAGYPSQEGGAAIFDILTGKAAPAGRLPITQYPAAYTAQVPMTEMGLRAGGDNPGRTYRWYDKAVVPFGFGLHYTSFEVSWDRGRLGPYNTAALVNRAPGGSHVDRALFDTFRVQVQNTGTVTSDYVALLFVKTEDAGPEPYPLKTLVGYTRVQQVKPGERRSVEIEVTLGAMARTAANGDLVLYPGKYTLQVDVGERGYPTARVSVHGKEVVLDHFPQPPEGR</sequence>
<feature type="signal peptide" evidence="2">
    <location>
        <begin position="1"/>
        <end position="25"/>
    </location>
</feature>
<feature type="chain" id="PRO_0000394085" description="Probable exo-1,4-beta-xylosidase bxlB">
    <location>
        <begin position="26"/>
        <end position="771"/>
    </location>
</feature>
<feature type="active site" evidence="1">
    <location>
        <position position="293"/>
    </location>
</feature>
<feature type="glycosylation site" description="N-linked (GlcNAc...) asparagine" evidence="2">
    <location>
        <position position="67"/>
    </location>
</feature>
<feature type="glycosylation site" description="N-linked (GlcNAc...) asparagine" evidence="2">
    <location>
        <position position="305"/>
    </location>
</feature>
<feature type="glycosylation site" description="N-linked (GlcNAc...) asparagine" evidence="2">
    <location>
        <position position="345"/>
    </location>
</feature>
<feature type="glycosylation site" description="N-linked (GlcNAc...) asparagine" evidence="2">
    <location>
        <position position="423"/>
    </location>
</feature>
<feature type="glycosylation site" description="N-linked (GlcNAc...) asparagine" evidence="2">
    <location>
        <position position="462"/>
    </location>
</feature>
<feature type="glycosylation site" description="N-linked (GlcNAc...) asparagine" evidence="2">
    <location>
        <position position="463"/>
    </location>
</feature>
<evidence type="ECO:0000250" key="1"/>
<evidence type="ECO:0000255" key="2"/>
<evidence type="ECO:0000305" key="3"/>
<reference key="1">
    <citation type="journal article" date="2008" name="PLoS Genet.">
        <title>Genomic islands in the pathogenic filamentous fungus Aspergillus fumigatus.</title>
        <authorList>
            <person name="Fedorova N.D."/>
            <person name="Khaldi N."/>
            <person name="Joardar V.S."/>
            <person name="Maiti R."/>
            <person name="Amedeo P."/>
            <person name="Anderson M.J."/>
            <person name="Crabtree J."/>
            <person name="Silva J.C."/>
            <person name="Badger J.H."/>
            <person name="Albarraq A."/>
            <person name="Angiuoli S."/>
            <person name="Bussey H."/>
            <person name="Bowyer P."/>
            <person name="Cotty P.J."/>
            <person name="Dyer P.S."/>
            <person name="Egan A."/>
            <person name="Galens K."/>
            <person name="Fraser-Liggett C.M."/>
            <person name="Haas B.J."/>
            <person name="Inman J.M."/>
            <person name="Kent R."/>
            <person name="Lemieux S."/>
            <person name="Malavazi I."/>
            <person name="Orvis J."/>
            <person name="Roemer T."/>
            <person name="Ronning C.M."/>
            <person name="Sundaram J.P."/>
            <person name="Sutton G."/>
            <person name="Turner G."/>
            <person name="Venter J.C."/>
            <person name="White O.R."/>
            <person name="Whitty B.R."/>
            <person name="Youngman P."/>
            <person name="Wolfe K.H."/>
            <person name="Goldman G.H."/>
            <person name="Wortman J.R."/>
            <person name="Jiang B."/>
            <person name="Denning D.W."/>
            <person name="Nierman W.C."/>
        </authorList>
    </citation>
    <scope>NUCLEOTIDE SEQUENCE [LARGE SCALE GENOMIC DNA]</scope>
    <source>
        <strain>ATCC 1007 / CBS 513.65 / DSM 816 / NCTC 3887 / NRRL 1 / QM 1276 / 107</strain>
    </source>
</reference>